<dbReference type="EC" id="2.4.2.21" evidence="1"/>
<dbReference type="EMBL" id="CP000738">
    <property type="protein sequence ID" value="ABR60444.1"/>
    <property type="molecule type" value="Genomic_DNA"/>
</dbReference>
<dbReference type="RefSeq" id="WP_011975751.1">
    <property type="nucleotide sequence ID" value="NC_009636.1"/>
</dbReference>
<dbReference type="RefSeq" id="YP_001327279.1">
    <property type="nucleotide sequence ID" value="NC_009636.1"/>
</dbReference>
<dbReference type="SMR" id="A6U9W4"/>
<dbReference type="STRING" id="366394.Smed_1603"/>
<dbReference type="GeneID" id="61614362"/>
<dbReference type="KEGG" id="smd:Smed_1603"/>
<dbReference type="PATRIC" id="fig|366394.8.peg.4742"/>
<dbReference type="eggNOG" id="COG2038">
    <property type="taxonomic scope" value="Bacteria"/>
</dbReference>
<dbReference type="HOGENOM" id="CLU_002982_0_1_5"/>
<dbReference type="OrthoDB" id="9781491at2"/>
<dbReference type="UniPathway" id="UPA00061">
    <property type="reaction ID" value="UER00516"/>
</dbReference>
<dbReference type="Proteomes" id="UP000001108">
    <property type="component" value="Chromosome"/>
</dbReference>
<dbReference type="GO" id="GO:0008939">
    <property type="term" value="F:nicotinate-nucleotide-dimethylbenzimidazole phosphoribosyltransferase activity"/>
    <property type="evidence" value="ECO:0007669"/>
    <property type="project" value="UniProtKB-UniRule"/>
</dbReference>
<dbReference type="GO" id="GO:0009236">
    <property type="term" value="P:cobalamin biosynthetic process"/>
    <property type="evidence" value="ECO:0007669"/>
    <property type="project" value="UniProtKB-KW"/>
</dbReference>
<dbReference type="CDD" id="cd02439">
    <property type="entry name" value="DMB-PRT_CobT"/>
    <property type="match status" value="1"/>
</dbReference>
<dbReference type="Gene3D" id="1.10.1610.10">
    <property type="match status" value="1"/>
</dbReference>
<dbReference type="Gene3D" id="3.40.50.10210">
    <property type="match status" value="1"/>
</dbReference>
<dbReference type="HAMAP" id="MF_00230">
    <property type="entry name" value="CobT"/>
    <property type="match status" value="1"/>
</dbReference>
<dbReference type="InterPro" id="IPR003200">
    <property type="entry name" value="Nict_dMeBzImd_PRibTrfase"/>
</dbReference>
<dbReference type="InterPro" id="IPR017846">
    <property type="entry name" value="Nict_dMeBzImd_PRibTrfase_bact"/>
</dbReference>
<dbReference type="InterPro" id="IPR023195">
    <property type="entry name" value="Nict_dMeBzImd_PRibTrfase_N"/>
</dbReference>
<dbReference type="InterPro" id="IPR036087">
    <property type="entry name" value="Nict_dMeBzImd_PRibTrfase_sf"/>
</dbReference>
<dbReference type="NCBIfam" id="TIGR03160">
    <property type="entry name" value="cobT_DBIPRT"/>
    <property type="match status" value="1"/>
</dbReference>
<dbReference type="NCBIfam" id="NF000996">
    <property type="entry name" value="PRK00105.1"/>
    <property type="match status" value="1"/>
</dbReference>
<dbReference type="PANTHER" id="PTHR43463">
    <property type="entry name" value="NICOTINATE-NUCLEOTIDE--DIMETHYLBENZIMIDAZOLE PHOSPHORIBOSYLTRANSFERASE"/>
    <property type="match status" value="1"/>
</dbReference>
<dbReference type="PANTHER" id="PTHR43463:SF1">
    <property type="entry name" value="NICOTINATE-NUCLEOTIDE--DIMETHYLBENZIMIDAZOLE PHOSPHORIBOSYLTRANSFERASE"/>
    <property type="match status" value="1"/>
</dbReference>
<dbReference type="Pfam" id="PF02277">
    <property type="entry name" value="DBI_PRT"/>
    <property type="match status" value="1"/>
</dbReference>
<dbReference type="SUPFAM" id="SSF52733">
    <property type="entry name" value="Nicotinate mononucleotide:5,6-dimethylbenzimidazole phosphoribosyltransferase (CobT)"/>
    <property type="match status" value="1"/>
</dbReference>
<accession>A6U9W4</accession>
<sequence length="338" mass="34649">MSASGLPFDDFRALLRNLPGPDTAALVAARERDGQLTKPPGALGRLEEIAFWLAAWTGRPPAVNRPLVAIFAGNHGVTRQGVTPFPASVTAQMVENFAAGGAAINQICVAHDLGLKVFDLALDYPTGDITEEPALSERDCAATMAFGMEAIAGGTDLLCIGEMGIGNTTIAAAINLGLYGGTAEEWVGPGTGSEGEVLKRKIAAVKKAVALHRDHLSDPLEVMRRLGGREIAAMAGAILAARMQKVPVIIDGYVATAAAAILKAANPAALDHCLIGHVSSEPGHMRAIEKLGKTPLLALGMRLGEGTGAALAAGIVKAAAACHSGMATFAQAGVSNKV</sequence>
<gene>
    <name evidence="1" type="primary">cobT</name>
    <name type="ordered locus">Smed_1603</name>
</gene>
<evidence type="ECO:0000255" key="1">
    <source>
        <dbReference type="HAMAP-Rule" id="MF_00230"/>
    </source>
</evidence>
<feature type="chain" id="PRO_1000021637" description="Nicotinate-nucleotide--dimethylbenzimidazole phosphoribosyltransferase">
    <location>
        <begin position="1"/>
        <end position="338"/>
    </location>
</feature>
<feature type="active site" description="Proton acceptor" evidence="1">
    <location>
        <position position="305"/>
    </location>
</feature>
<keyword id="KW-0169">Cobalamin biosynthesis</keyword>
<keyword id="KW-0328">Glycosyltransferase</keyword>
<keyword id="KW-0808">Transferase</keyword>
<proteinExistence type="inferred from homology"/>
<organism>
    <name type="scientific">Sinorhizobium medicae (strain WSM419)</name>
    <name type="common">Ensifer medicae</name>
    <dbReference type="NCBI Taxonomy" id="366394"/>
    <lineage>
        <taxon>Bacteria</taxon>
        <taxon>Pseudomonadati</taxon>
        <taxon>Pseudomonadota</taxon>
        <taxon>Alphaproteobacteria</taxon>
        <taxon>Hyphomicrobiales</taxon>
        <taxon>Rhizobiaceae</taxon>
        <taxon>Sinorhizobium/Ensifer group</taxon>
        <taxon>Sinorhizobium</taxon>
    </lineage>
</organism>
<comment type="function">
    <text evidence="1">Catalyzes the synthesis of alpha-ribazole-5'-phosphate from nicotinate mononucleotide (NAMN) and 5,6-dimethylbenzimidazole (DMB).</text>
</comment>
<comment type="catalytic activity">
    <reaction evidence="1">
        <text>5,6-dimethylbenzimidazole + nicotinate beta-D-ribonucleotide = alpha-ribazole 5'-phosphate + nicotinate + H(+)</text>
        <dbReference type="Rhea" id="RHEA:11196"/>
        <dbReference type="ChEBI" id="CHEBI:15378"/>
        <dbReference type="ChEBI" id="CHEBI:15890"/>
        <dbReference type="ChEBI" id="CHEBI:32544"/>
        <dbReference type="ChEBI" id="CHEBI:57502"/>
        <dbReference type="ChEBI" id="CHEBI:57918"/>
        <dbReference type="EC" id="2.4.2.21"/>
    </reaction>
</comment>
<comment type="pathway">
    <text evidence="1">Nucleoside biosynthesis; alpha-ribazole biosynthesis; alpha-ribazole from 5,6-dimethylbenzimidazole: step 1/2.</text>
</comment>
<comment type="similarity">
    <text evidence="1">Belongs to the CobT family.</text>
</comment>
<reference key="1">
    <citation type="submission" date="2007-06" db="EMBL/GenBank/DDBJ databases">
        <title>Complete sequence of Sinorhizobium medicae WSM419 chromosome.</title>
        <authorList>
            <consortium name="US DOE Joint Genome Institute"/>
            <person name="Copeland A."/>
            <person name="Lucas S."/>
            <person name="Lapidus A."/>
            <person name="Barry K."/>
            <person name="Glavina del Rio T."/>
            <person name="Dalin E."/>
            <person name="Tice H."/>
            <person name="Pitluck S."/>
            <person name="Chain P."/>
            <person name="Malfatti S."/>
            <person name="Shin M."/>
            <person name="Vergez L."/>
            <person name="Schmutz J."/>
            <person name="Larimer F."/>
            <person name="Land M."/>
            <person name="Hauser L."/>
            <person name="Kyrpides N."/>
            <person name="Mikhailova N."/>
            <person name="Reeve W.G."/>
            <person name="Richardson P."/>
        </authorList>
    </citation>
    <scope>NUCLEOTIDE SEQUENCE [LARGE SCALE GENOMIC DNA]</scope>
    <source>
        <strain>WSM419</strain>
    </source>
</reference>
<protein>
    <recommendedName>
        <fullName evidence="1">Nicotinate-nucleotide--dimethylbenzimidazole phosphoribosyltransferase</fullName>
        <shortName evidence="1">NN:DBI PRT</shortName>
        <ecNumber evidence="1">2.4.2.21</ecNumber>
    </recommendedName>
    <alternativeName>
        <fullName evidence="1">N(1)-alpha-phosphoribosyltransferase</fullName>
    </alternativeName>
</protein>
<name>COBT_SINMW</name>